<dbReference type="EMBL" id="FO081312">
    <property type="protein sequence ID" value="CCD70702.1"/>
    <property type="molecule type" value="Genomic_DNA"/>
</dbReference>
<dbReference type="PIR" id="S44641">
    <property type="entry name" value="S44641"/>
</dbReference>
<dbReference type="RefSeq" id="NP_498471.1">
    <property type="nucleotide sequence ID" value="NM_066070.5"/>
</dbReference>
<dbReference type="BioGRID" id="41161">
    <property type="interactions" value="1"/>
</dbReference>
<dbReference type="FunCoup" id="P41882">
    <property type="interactions" value="1522"/>
</dbReference>
<dbReference type="STRING" id="6239.F37A4.4.1"/>
<dbReference type="PaxDb" id="6239-F37A4.4"/>
<dbReference type="PeptideAtlas" id="P41882"/>
<dbReference type="EnsemblMetazoa" id="F37A4.4.1">
    <property type="protein sequence ID" value="F37A4.4.1"/>
    <property type="gene ID" value="WBGene00018134"/>
</dbReference>
<dbReference type="GeneID" id="175945"/>
<dbReference type="KEGG" id="cel:CELE_F37A4.4"/>
<dbReference type="UCSC" id="F37A4.4">
    <property type="organism name" value="c. elegans"/>
</dbReference>
<dbReference type="AGR" id="WB:WBGene00018134"/>
<dbReference type="CTD" id="175945"/>
<dbReference type="WormBase" id="F37A4.4">
    <property type="protein sequence ID" value="CE24953"/>
    <property type="gene ID" value="WBGene00018134"/>
</dbReference>
<dbReference type="eggNOG" id="KOG4177">
    <property type="taxonomic scope" value="Eukaryota"/>
</dbReference>
<dbReference type="GeneTree" id="ENSGT00970000195865"/>
<dbReference type="HOGENOM" id="CLU_002600_0_0_1"/>
<dbReference type="InParanoid" id="P41882"/>
<dbReference type="OMA" id="GAYINVC"/>
<dbReference type="OrthoDB" id="539213at2759"/>
<dbReference type="PhylomeDB" id="P41882"/>
<dbReference type="PRO" id="PR:P41882"/>
<dbReference type="Proteomes" id="UP000001940">
    <property type="component" value="Chromosome III"/>
</dbReference>
<dbReference type="Bgee" id="WBGene00018134">
    <property type="expression patterns" value="Expressed in material anatomical entity and 3 other cell types or tissues"/>
</dbReference>
<dbReference type="Gene3D" id="1.25.40.20">
    <property type="entry name" value="Ankyrin repeat-containing domain"/>
    <property type="match status" value="1"/>
</dbReference>
<dbReference type="Gene3D" id="3.40.50.10190">
    <property type="entry name" value="BRCT domain"/>
    <property type="match status" value="1"/>
</dbReference>
<dbReference type="InterPro" id="IPR053345">
    <property type="entry name" value="Ankyrin_repeat-containing"/>
</dbReference>
<dbReference type="InterPro" id="IPR002110">
    <property type="entry name" value="Ankyrin_rpt"/>
</dbReference>
<dbReference type="InterPro" id="IPR036770">
    <property type="entry name" value="Ankyrin_rpt-contain_sf"/>
</dbReference>
<dbReference type="InterPro" id="IPR001357">
    <property type="entry name" value="BRCT_dom"/>
</dbReference>
<dbReference type="InterPro" id="IPR036420">
    <property type="entry name" value="BRCT_dom_sf"/>
</dbReference>
<dbReference type="InterPro" id="IPR003125">
    <property type="entry name" value="WSN"/>
</dbReference>
<dbReference type="PANTHER" id="PTHR22956:SF17">
    <property type="entry name" value="ANKYRIN REPEAT-CONTAINING PROTEIN F37A4.4-RELATED"/>
    <property type="match status" value="1"/>
</dbReference>
<dbReference type="PANTHER" id="PTHR22956">
    <property type="entry name" value="ANKYRIN REPEAT-CONTAINING PROTEIN F37A4.4-RELATED-RELATED"/>
    <property type="match status" value="1"/>
</dbReference>
<dbReference type="Pfam" id="PF12796">
    <property type="entry name" value="Ank_2"/>
    <property type="match status" value="1"/>
</dbReference>
<dbReference type="Pfam" id="PF00533">
    <property type="entry name" value="BRCT"/>
    <property type="match status" value="1"/>
</dbReference>
<dbReference type="Pfam" id="PF02206">
    <property type="entry name" value="WSN"/>
    <property type="match status" value="1"/>
</dbReference>
<dbReference type="SMART" id="SM00248">
    <property type="entry name" value="ANK"/>
    <property type="match status" value="2"/>
</dbReference>
<dbReference type="SMART" id="SM00292">
    <property type="entry name" value="BRCT"/>
    <property type="match status" value="1"/>
</dbReference>
<dbReference type="SMART" id="SM00453">
    <property type="entry name" value="WSN"/>
    <property type="match status" value="1"/>
</dbReference>
<dbReference type="SUPFAM" id="SSF48403">
    <property type="entry name" value="Ankyrin repeat"/>
    <property type="match status" value="1"/>
</dbReference>
<dbReference type="SUPFAM" id="SSF52113">
    <property type="entry name" value="BRCT domain"/>
    <property type="match status" value="1"/>
</dbReference>
<dbReference type="PROSITE" id="PS50297">
    <property type="entry name" value="ANK_REP_REGION"/>
    <property type="match status" value="1"/>
</dbReference>
<dbReference type="PROSITE" id="PS50088">
    <property type="entry name" value="ANK_REPEAT"/>
    <property type="match status" value="1"/>
</dbReference>
<dbReference type="PROSITE" id="PS50172">
    <property type="entry name" value="BRCT"/>
    <property type="match status" value="1"/>
</dbReference>
<proteinExistence type="predicted"/>
<keyword id="KW-0040">ANK repeat</keyword>
<keyword id="KW-1185">Reference proteome</keyword>
<keyword id="KW-0677">Repeat</keyword>
<accession>P41882</accession>
<sequence>MKLCHAIFSTFVVFFVASGAGEKQGESQLQQIYDELSILSRVTNAIALQAAALSKTVKIREVITELLKVDNGNFSNLLSLDPAHLVKNLDELHKKSLQAVSGSNEQLQQDLKEMIAMNGLLAAVESENYTEKATVNSLIVLKKVDEKMEICDESLITIMFNISQAMSGVPFAESDEMKIFSSMKTMKKAFYKCISKFPAFMQKLYEYNYPLSGFLELNDTMNTIKALNELDIANKIPNMLQKFKTPFLNILAVGDHRNKGNTGKLLQSAITLFKKTVYSNSSTRLFLTAGFPESGDMKRVAKDLTSDWFKKKVSRGKSTAELETALKPFNQFAESMAHVFKSWNNFRDDFQTDSALLATIPDLLSQIDDYDRNVDKKKFLENFEATFRTCFKNYKNALDQGEETKFLKNFSAVYLLVRSVQAVEQWASEISTMFDEKAMDVYFEELEKLTPSNIKEQVEKITNFDDFLKIINKFTMLKSLQTQYESAYKTSNSSELSLSKIITDAGLVDTSKCLEKDKLDSSKLLKMLQFMQHMMQLDIDYSTLKANLDNFFELKKKMLETEKLVKGFTSRSARAASNSGSPVLKIKDSQKHADHLGNGLLAIKKMIISLKEKATILKSTMFNAKANQEIREKNPIDYIKEFWTNPGPSIEKLVSDLEKLEQSSKSYRKADLLTIRKVFEDGSKIVGIPEVFSYIDSQFEKKGSQYSNERKITQALSTLDLNFASHKGALSAASLSVDNLKLYFDDLFGLTPKVSVQSESTSPIVVVLICVAIVLVLVILAIVGYGFTSNGRNQYINLYLYYFGKTSDYEKRWRYSLFMDRVDGKNVLIDSVREINATNLLKAVKRGAYINVCNKYGNTALHVATRRGYQNLVEILIKHGADRSFLNPQNKTAEQMIPVNYQETHKEKIERFKSIESIYNKYRKKKFKLCVPEKFPVSSFHIYIEDRTDDNVTNEFTTKFQSITSDEAMITTTHVVVKTTEDGILETDDLNLLIWIFHGSIIVRDTWMVDCLRDEKLIEKDCDYLVEKVKYKGIIYDTVTQWSNAMAKATTPFLYGVHVALCMKNCPYLASLTAIIQGQGGTMLDKFPDKDAFNKGSHPYLHKNLGPIFLLHDGTGDLDLYRSDPDKMFTLFTEQQFMDLLFKREINKDTNPKIIPVLVDEED</sequence>
<name>YPT4_CAEEL</name>
<reference key="1">
    <citation type="journal article" date="1998" name="Science">
        <title>Genome sequence of the nematode C. elegans: a platform for investigating biology.</title>
        <authorList>
            <consortium name="The C. elegans sequencing consortium"/>
        </authorList>
    </citation>
    <scope>NUCLEOTIDE SEQUENCE [LARGE SCALE GENOMIC DNA]</scope>
    <source>
        <strain>Bristol N2</strain>
    </source>
</reference>
<protein>
    <recommendedName>
        <fullName>Ankyrin repeat-containing protein F37A4.4</fullName>
    </recommendedName>
</protein>
<evidence type="ECO:0000255" key="1">
    <source>
        <dbReference type="PROSITE-ProRule" id="PRU00033"/>
    </source>
</evidence>
<gene>
    <name type="ORF">F37A4.4</name>
</gene>
<feature type="chain" id="PRO_0000067243" description="Ankyrin repeat-containing protein F37A4.4">
    <location>
        <begin position="1"/>
        <end position="1163"/>
    </location>
</feature>
<feature type="repeat" description="ANK">
    <location>
        <begin position="856"/>
        <end position="885"/>
    </location>
</feature>
<feature type="domain" description="BRCT" evidence="1">
    <location>
        <begin position="929"/>
        <end position="1025"/>
    </location>
</feature>
<organism>
    <name type="scientific">Caenorhabditis elegans</name>
    <dbReference type="NCBI Taxonomy" id="6239"/>
    <lineage>
        <taxon>Eukaryota</taxon>
        <taxon>Metazoa</taxon>
        <taxon>Ecdysozoa</taxon>
        <taxon>Nematoda</taxon>
        <taxon>Chromadorea</taxon>
        <taxon>Rhabditida</taxon>
        <taxon>Rhabditina</taxon>
        <taxon>Rhabditomorpha</taxon>
        <taxon>Rhabditoidea</taxon>
        <taxon>Rhabditidae</taxon>
        <taxon>Peloderinae</taxon>
        <taxon>Caenorhabditis</taxon>
    </lineage>
</organism>